<organism>
    <name type="scientific">Escherichia coli (strain K12)</name>
    <dbReference type="NCBI Taxonomy" id="83333"/>
    <lineage>
        <taxon>Bacteria</taxon>
        <taxon>Pseudomonadati</taxon>
        <taxon>Pseudomonadota</taxon>
        <taxon>Gammaproteobacteria</taxon>
        <taxon>Enterobacterales</taxon>
        <taxon>Enterobacteriaceae</taxon>
        <taxon>Escherichia</taxon>
    </lineage>
</organism>
<protein>
    <recommendedName>
        <fullName>Anti-sigma-E factor RseA</fullName>
    </recommendedName>
    <alternativeName>
        <fullName>Regulator of SigE</fullName>
    </alternativeName>
    <alternativeName>
        <fullName>Sigma-E anti-sigma factor RseA</fullName>
    </alternativeName>
    <alternativeName>
        <fullName>Sigma-E factor negative regulatory protein</fullName>
    </alternativeName>
</protein>
<keyword id="KW-0002">3D-structure</keyword>
<keyword id="KW-0997">Cell inner membrane</keyword>
<keyword id="KW-1003">Cell membrane</keyword>
<keyword id="KW-0175">Coiled coil</keyword>
<keyword id="KW-0903">Direct protein sequencing</keyword>
<keyword id="KW-0472">Membrane</keyword>
<keyword id="KW-1185">Reference proteome</keyword>
<keyword id="KW-0735">Signal-anchor</keyword>
<keyword id="KW-0804">Transcription</keyword>
<keyword id="KW-0805">Transcription regulation</keyword>
<keyword id="KW-0812">Transmembrane</keyword>
<keyword id="KW-1133">Transmembrane helix</keyword>
<dbReference type="EMBL" id="U10148">
    <property type="protein sequence ID" value="AAA83999.1"/>
    <property type="molecule type" value="Genomic_DNA"/>
</dbReference>
<dbReference type="EMBL" id="U37089">
    <property type="protein sequence ID" value="AAC45315.1"/>
    <property type="molecule type" value="Genomic_DNA"/>
</dbReference>
<dbReference type="EMBL" id="D64044">
    <property type="protein sequence ID" value="BAA10919.1"/>
    <property type="molecule type" value="Genomic_DNA"/>
</dbReference>
<dbReference type="EMBL" id="D13169">
    <property type="status" value="NOT_ANNOTATED_CDS"/>
    <property type="molecule type" value="Genomic_DNA"/>
</dbReference>
<dbReference type="EMBL" id="U00096">
    <property type="protein sequence ID" value="AAC75625.1"/>
    <property type="molecule type" value="Genomic_DNA"/>
</dbReference>
<dbReference type="EMBL" id="AP009048">
    <property type="protein sequence ID" value="BAE76748.1"/>
    <property type="molecule type" value="Genomic_DNA"/>
</dbReference>
<dbReference type="EMBL" id="U37455">
    <property type="protein sequence ID" value="AAC45318.1"/>
    <property type="molecule type" value="Genomic_DNA"/>
</dbReference>
<dbReference type="PIR" id="B57255">
    <property type="entry name" value="B57255"/>
</dbReference>
<dbReference type="RefSeq" id="NP_417067.1">
    <property type="nucleotide sequence ID" value="NC_000913.3"/>
</dbReference>
<dbReference type="RefSeq" id="WP_001168459.1">
    <property type="nucleotide sequence ID" value="NZ_STEB01000011.1"/>
</dbReference>
<dbReference type="PDB" id="1OR7">
    <property type="method" value="X-ray"/>
    <property type="resolution" value="2.00 A"/>
    <property type="chains" value="C/F=1-90"/>
</dbReference>
<dbReference type="PDB" id="1YFN">
    <property type="method" value="X-ray"/>
    <property type="resolution" value="1.80 A"/>
    <property type="chains" value="E/F/G/H=77-108"/>
</dbReference>
<dbReference type="PDB" id="3M4W">
    <property type="method" value="X-ray"/>
    <property type="resolution" value="2.30 A"/>
    <property type="chains" value="E/F/G/H=121-216"/>
</dbReference>
<dbReference type="PDBsum" id="1OR7"/>
<dbReference type="PDBsum" id="1YFN"/>
<dbReference type="PDBsum" id="3M4W"/>
<dbReference type="SMR" id="P0AFX7"/>
<dbReference type="BioGRID" id="4261964">
    <property type="interactions" value="2"/>
</dbReference>
<dbReference type="BioGRID" id="851391">
    <property type="interactions" value="1"/>
</dbReference>
<dbReference type="ComplexPortal" id="CPX-2532">
    <property type="entry name" value="rpoe-rsea-rseb sigma-antisigma complex"/>
</dbReference>
<dbReference type="DIP" id="DIP-39581N"/>
<dbReference type="FunCoup" id="P0AFX7">
    <property type="interactions" value="51"/>
</dbReference>
<dbReference type="IntAct" id="P0AFX7">
    <property type="interactions" value="6"/>
</dbReference>
<dbReference type="STRING" id="511145.b2572"/>
<dbReference type="jPOST" id="P0AFX7"/>
<dbReference type="PaxDb" id="511145-b2572"/>
<dbReference type="EnsemblBacteria" id="AAC75625">
    <property type="protein sequence ID" value="AAC75625"/>
    <property type="gene ID" value="b2572"/>
</dbReference>
<dbReference type="GeneID" id="75172686"/>
<dbReference type="GeneID" id="947053"/>
<dbReference type="KEGG" id="ecj:JW2556"/>
<dbReference type="KEGG" id="eco:b2572"/>
<dbReference type="KEGG" id="ecoc:C3026_14245"/>
<dbReference type="PATRIC" id="fig|1411691.4.peg.4162"/>
<dbReference type="EchoBASE" id="EB2245"/>
<dbReference type="eggNOG" id="COG3073">
    <property type="taxonomic scope" value="Bacteria"/>
</dbReference>
<dbReference type="HOGENOM" id="CLU_108851_1_0_6"/>
<dbReference type="InParanoid" id="P0AFX7"/>
<dbReference type="OMA" id="PEWNIAE"/>
<dbReference type="OrthoDB" id="6194196at2"/>
<dbReference type="PhylomeDB" id="P0AFX7"/>
<dbReference type="BioCyc" id="EcoCyc:EG12341-MONOMER"/>
<dbReference type="EvolutionaryTrace" id="P0AFX7"/>
<dbReference type="PRO" id="PR:P0AFX7"/>
<dbReference type="Proteomes" id="UP000000625">
    <property type="component" value="Chromosome"/>
</dbReference>
<dbReference type="GO" id="GO:0005886">
    <property type="term" value="C:plasma membrane"/>
    <property type="evidence" value="ECO:0000314"/>
    <property type="project" value="CACAO"/>
</dbReference>
<dbReference type="GO" id="GO:1903865">
    <property type="term" value="C:sigma factor antagonist complex"/>
    <property type="evidence" value="ECO:0000353"/>
    <property type="project" value="ComplexPortal"/>
</dbReference>
<dbReference type="GO" id="GO:0060090">
    <property type="term" value="F:molecular adaptor activity"/>
    <property type="evidence" value="ECO:0000269"/>
    <property type="project" value="DisProt"/>
</dbReference>
<dbReference type="GO" id="GO:0016989">
    <property type="term" value="F:sigma factor antagonist activity"/>
    <property type="evidence" value="ECO:0000315"/>
    <property type="project" value="EcoCyc"/>
</dbReference>
<dbReference type="GO" id="GO:0045892">
    <property type="term" value="P:negative regulation of DNA-templated transcription"/>
    <property type="evidence" value="ECO:0000303"/>
    <property type="project" value="ComplexPortal"/>
</dbReference>
<dbReference type="GO" id="GO:0006950">
    <property type="term" value="P:response to stress"/>
    <property type="evidence" value="ECO:0000314"/>
    <property type="project" value="EcoCyc"/>
</dbReference>
<dbReference type="CDD" id="cd16328">
    <property type="entry name" value="RseA_N"/>
    <property type="match status" value="1"/>
</dbReference>
<dbReference type="DisProt" id="DP00552"/>
<dbReference type="FunFam" id="1.10.10.880:FF:000001">
    <property type="entry name" value="Anti-sigma-E factor RseA"/>
    <property type="match status" value="1"/>
</dbReference>
<dbReference type="FunFam" id="1.20.5.3960:FF:000001">
    <property type="entry name" value="Anti-sigma-E factor RseA"/>
    <property type="match status" value="1"/>
</dbReference>
<dbReference type="Gene3D" id="1.20.5.3960">
    <property type="match status" value="1"/>
</dbReference>
<dbReference type="Gene3D" id="1.10.10.880">
    <property type="entry name" value="Anti sigma-E protein RseA, N-terminal domain"/>
    <property type="match status" value="1"/>
</dbReference>
<dbReference type="InterPro" id="IPR052383">
    <property type="entry name" value="Anti-sigma-E_RseA-like"/>
</dbReference>
<dbReference type="InterPro" id="IPR005573">
    <property type="entry name" value="Anti-sigma_E_RseA_C"/>
</dbReference>
<dbReference type="InterPro" id="IPR005572">
    <property type="entry name" value="Anti-sigma_E_RseA_N"/>
</dbReference>
<dbReference type="InterPro" id="IPR036147">
    <property type="entry name" value="Anti-sigma_E_RseA_N_sf"/>
</dbReference>
<dbReference type="InterPro" id="IPR026279">
    <property type="entry name" value="RseA"/>
</dbReference>
<dbReference type="NCBIfam" id="NF008116">
    <property type="entry name" value="PRK10863.1"/>
    <property type="match status" value="1"/>
</dbReference>
<dbReference type="PANTHER" id="PTHR38104">
    <property type="match status" value="1"/>
</dbReference>
<dbReference type="PANTHER" id="PTHR38104:SF1">
    <property type="entry name" value="ANTI-SIGMA-E FACTOR RSEA"/>
    <property type="match status" value="1"/>
</dbReference>
<dbReference type="Pfam" id="PF03873">
    <property type="entry name" value="RseA_C"/>
    <property type="match status" value="1"/>
</dbReference>
<dbReference type="Pfam" id="PF03872">
    <property type="entry name" value="RseA_N"/>
    <property type="match status" value="1"/>
</dbReference>
<dbReference type="PIRSF" id="PIRSF016938">
    <property type="entry name" value="RseA"/>
    <property type="match status" value="1"/>
</dbReference>
<dbReference type="SUPFAM" id="SSF89069">
    <property type="entry name" value="N-terminal, cytoplasmic domain of anti-sigmaE factor RseA"/>
    <property type="match status" value="1"/>
</dbReference>
<reference key="1">
    <citation type="journal article" date="1995" name="J. Bacteriol.">
        <title>Functional equivalence of Escherichia coli sigma E and Pseudomonas aeruginosa AlgU: E. coli rpoE restores mucoidy and reduces sensitivity to reactive oxygen intermediates in algU mutants of P. aeruginosa.</title>
        <authorList>
            <person name="Yu H."/>
            <person name="Schurr M.J."/>
            <person name="Deretic V."/>
        </authorList>
    </citation>
    <scope>NUCLEOTIDE SEQUENCE [GENOMIC DNA]</scope>
    <scope>IDENTIFICATION</scope>
    <source>
        <strain>K12</strain>
    </source>
</reference>
<reference key="2">
    <citation type="journal article" date="1995" name="EMBO J.">
        <title>The rpoE gene encoding the sigma E (sigma 24) heat shock sigma factor of Escherichia coli.</title>
        <authorList>
            <person name="Raina S."/>
            <person name="Missiakas D."/>
            <person name="Georgopoulos C."/>
        </authorList>
    </citation>
    <scope>NUCLEOTIDE SEQUENCE [GENOMIC DNA]</scope>
    <source>
        <strain>K12 / W3110 / ATCC 27325 / DSM 5911</strain>
    </source>
</reference>
<reference key="3">
    <citation type="submission" date="1995-09" db="EMBL/GenBank/DDBJ databases">
        <authorList>
            <person name="Nashimoto H."/>
            <person name="Saito N."/>
        </authorList>
    </citation>
    <scope>NUCLEOTIDE SEQUENCE [GENOMIC DNA]</scope>
    <source>
        <strain>K12 / W3110 / ATCC 27325 / DSM 5911</strain>
    </source>
</reference>
<reference key="4">
    <citation type="journal article" date="1997" name="Science">
        <title>The complete genome sequence of Escherichia coli K-12.</title>
        <authorList>
            <person name="Blattner F.R."/>
            <person name="Plunkett G. III"/>
            <person name="Bloch C.A."/>
            <person name="Perna N.T."/>
            <person name="Burland V."/>
            <person name="Riley M."/>
            <person name="Collado-Vides J."/>
            <person name="Glasner J.D."/>
            <person name="Rode C.K."/>
            <person name="Mayhew G.F."/>
            <person name="Gregor J."/>
            <person name="Davis N.W."/>
            <person name="Kirkpatrick H.A."/>
            <person name="Goeden M.A."/>
            <person name="Rose D.J."/>
            <person name="Mau B."/>
            <person name="Shao Y."/>
        </authorList>
    </citation>
    <scope>NUCLEOTIDE SEQUENCE [LARGE SCALE GENOMIC DNA]</scope>
    <source>
        <strain>K12 / MG1655 / ATCC 47076</strain>
    </source>
</reference>
<reference key="5">
    <citation type="journal article" date="2006" name="Mol. Syst. Biol.">
        <title>Highly accurate genome sequences of Escherichia coli K-12 strains MG1655 and W3110.</title>
        <authorList>
            <person name="Hayashi K."/>
            <person name="Morooka N."/>
            <person name="Yamamoto Y."/>
            <person name="Fujita K."/>
            <person name="Isono K."/>
            <person name="Choi S."/>
            <person name="Ohtsubo E."/>
            <person name="Baba T."/>
            <person name="Wanner B.L."/>
            <person name="Mori H."/>
            <person name="Horiuchi T."/>
        </authorList>
    </citation>
    <scope>NUCLEOTIDE SEQUENCE [LARGE SCALE GENOMIC DNA]</scope>
    <source>
        <strain>K12 / W3110 / ATCC 27325 / DSM 5911</strain>
    </source>
</reference>
<reference key="6">
    <citation type="book" date="1993" name="The translational apparatus">
        <title>Non-ribosomal proteins affecting the assembly of ribosomes in Escherichia coli.</title>
        <editorList>
            <person name="Nierhaus K.H."/>
        </editorList>
        <authorList>
            <person name="Nashimoto H."/>
        </authorList>
    </citation>
    <scope>NUCLEOTIDE SEQUENCE [GENOMIC DNA] OF 1-208</scope>
    <source>
        <strain>K12</strain>
    </source>
</reference>
<reference key="7">
    <citation type="journal article" date="2004" name="Genes Dev.">
        <title>Modulating substrate choice: the SspB adaptor delivers a regulator of the extracytoplasmic-stress response to the AAA+ protease ClpXP for degradation.</title>
        <authorList>
            <person name="Flynn J.M."/>
            <person name="Levchenko I."/>
            <person name="Sauer R.T."/>
            <person name="Baker T.A."/>
        </authorList>
    </citation>
    <scope>PROTEIN SEQUENCE OF 4-108</scope>
    <scope>INTERACTION WITH RPOE AND SSPB</scope>
    <scope>DOMAIN</scope>
    <scope>CLEAVAGE BY CLPX-CLPP</scope>
    <scope>MUTAGENESIS OF 107-ALA-ALA-108</scope>
</reference>
<reference key="8">
    <citation type="journal article" date="2003" name="Cell">
        <title>OMP peptide signals initiate the envelope-stress response by activating DegS protease via relief of inhibition mediated by its PDZ domain.</title>
        <authorList>
            <person name="Walsh N.P."/>
            <person name="Alba B.M."/>
            <person name="Bose B."/>
            <person name="Gross C.A."/>
            <person name="Sauer R.T."/>
        </authorList>
    </citation>
    <scope>PROTEIN SEQUENCE OF 149-153</scope>
    <scope>CLEAVAGE BY DEGS</scope>
    <source>
        <strain>K12 / MC1061 / ATCC 53338 / DSM 7140</strain>
    </source>
</reference>
<reference key="9">
    <citation type="journal article" date="2009" name="Proc. Natl. Acad. Sci. U.S.A.">
        <title>Cleavage of RseA by RseP requires a carboxyl-terminal hydrophobic amino acid following DegS cleavage.</title>
        <authorList>
            <person name="Li X."/>
            <person name="Wang B."/>
            <person name="Feng L."/>
            <person name="Kang H."/>
            <person name="Qi Y."/>
            <person name="Wang J."/>
            <person name="Shi Y."/>
        </authorList>
    </citation>
    <scope>PROTEIN SEQUENCE OF 149-153</scope>
    <scope>CLEAVAGE BY DEGS AND RSEP</scope>
    <scope>MUTAGENESIS OF SER-146; PRO-147 AND VAL-148</scope>
</reference>
<reference key="10">
    <citation type="journal article" date="1997" name="Mol. Microbiol.">
        <title>The sigmaE-mediated response to extracytoplasmic stress in Escherichia coli is transduced by RseA and RseB, two negative regulators of sigmaE.</title>
        <authorList>
            <person name="De Las Penas A."/>
            <person name="Connolly L."/>
            <person name="Gross C.A."/>
        </authorList>
    </citation>
    <scope>NUCLEOTIDE SEQUENCE [GENOMIC DNA] OF 208-216</scope>
    <scope>FUNCTION AS AN ANTI-SIGMA FACTOR</scope>
    <scope>INTERACTION WITH RPOE AND RSEB</scope>
    <scope>SUBUNIT</scope>
    <scope>SUBCELLULAR LOCATION</scope>
    <scope>OPERON</scope>
    <scope>DOMAIN</scope>
    <scope>DISRUPTION PHENOTYPE</scope>
    <source>
        <strain>K12 / MC1061 / ATCC 53338 / DSM 7140</strain>
    </source>
</reference>
<reference key="11">
    <citation type="journal article" date="1997" name="Mol. Microbiol.">
        <title>Modulation of the Escherichia coli sigmaE (RpoE) heat-shock transcription-factor activity by the RseA, RseB and RseC proteins.</title>
        <authorList>
            <person name="Missiakas D."/>
            <person name="Mayer M.P."/>
            <person name="Lemaire M."/>
            <person name="Georgopoulos C."/>
            <person name="Raina S."/>
        </authorList>
    </citation>
    <scope>FUNCTION AS AN ANTI-SIGMA FACTOR</scope>
    <scope>INTERACTION WITH RPOE AND RSEB</scope>
    <scope>SUBUNIT</scope>
    <scope>SUBCELLULAR LOCATION</scope>
    <scope>DOMAIN</scope>
    <scope>TOPOLOGY</scope>
    <scope>DISRUPTION PHENOTYPE</scope>
    <scope>OPERON</scope>
    <scope>MUTAGENESIS OF 1-MET--GLU-28; ASP-11; LEU-19 AND TRP-33</scope>
    <source>
        <strain>K12 / MC4100 / ATCC 35695 / DSM 6574</strain>
    </source>
</reference>
<reference key="12">
    <citation type="journal article" date="1999" name="Genes Dev.">
        <title>The Escherichia coli sigma(E)-dependent extracytoplasmic stress response is controlled by the regulated proteolysis of an anti-sigma factor.</title>
        <authorList>
            <person name="Ades S.E."/>
            <person name="Connolly L.E."/>
            <person name="Alba B.M."/>
            <person name="Gross C.A."/>
        </authorList>
    </citation>
    <scope>INDUCTION</scope>
    <scope>PROBABLE CLEAVAGE BY DEGS</scope>
    <source>
        <strain>K12 / MC1061 / ATCC 53338 / DSM 7140</strain>
    </source>
</reference>
<reference key="13">
    <citation type="journal article" date="2000" name="J. Biol. Chem.">
        <title>RseB binding to the periplasmic domain of RseA modulates the RseA:sigmaE interaction in the cytoplasm and the availability of sigmaE.RNA polymerase.</title>
        <authorList>
            <person name="Collinet B."/>
            <person name="Yuzawa H."/>
            <person name="Chen T."/>
            <person name="Herrera C."/>
            <person name="Missiakas D."/>
        </authorList>
    </citation>
    <scope>INTERACTION WITH RPOE AND RSEB</scope>
    <scope>SUBCELLULAR LOCATION</scope>
    <scope>DISRUPTION PHENOTYPE</scope>
    <source>
        <strain>K12 / MC4100 / ATCC 35695 / DSM 6574</strain>
    </source>
</reference>
<reference key="14">
    <citation type="journal article" date="2002" name="Genes Dev.">
        <title>YaeL (EcfE) activates the sigma(E) pathway of stress response through a site-2 cleavage of anti-sigma(E), RseA.</title>
        <authorList>
            <person name="Kanehara K."/>
            <person name="Ito K."/>
            <person name="Akiyama Y."/>
        </authorList>
    </citation>
    <scope>CLEAVAGE BY DEGS AND RSEP</scope>
    <source>
        <strain>K12</strain>
    </source>
</reference>
<reference key="15">
    <citation type="journal article" date="2002" name="Genes Dev.">
        <title>DegS and YaeL participate sequentially in the cleavage of RseA to activate the sigma(E)-dependent extracytoplasmic stress response.</title>
        <authorList>
            <person name="Alba B.M."/>
            <person name="Leeds J.A."/>
            <person name="Onufryk C."/>
            <person name="Lu C.Z."/>
            <person name="Gross C.A."/>
        </authorList>
    </citation>
    <scope>CLEAVAGE BY DEGS AND RSEP</scope>
    <scope>SUBCELLULAR LOCATION</scope>
    <source>
        <strain>K12</strain>
    </source>
</reference>
<reference key="16">
    <citation type="journal article" date="2002" name="J. Biol. Chem.">
        <title>Interaction of the conserved region 4.2 of sigma(E) with the RseA anti-sigma factor.</title>
        <authorList>
            <person name="Tam C."/>
            <person name="Collinet B."/>
            <person name="Lau G."/>
            <person name="Raina S."/>
            <person name="Missiakas D."/>
        </authorList>
    </citation>
    <scope>INTERACTION WITH RPOE</scope>
    <scope>SUBUNIT</scope>
    <source>
        <strain>K12 / MC4100 / ATCC 35695 / DSM 6574</strain>
    </source>
</reference>
<reference key="17">
    <citation type="journal article" date="2003" name="EMBO J.">
        <title>YaeL proteolysis of RseA is controlled by the PDZ domain of YaeL and a Gln-rich region of RseA.</title>
        <authorList>
            <person name="Kanehara K."/>
            <person name="Ito K."/>
            <person name="Akiyama Y."/>
        </authorList>
    </citation>
    <scope>INTERACTION WITH RSEP</scope>
    <scope>DOMAIN</scope>
    <scope>CLEAVAGE BY RSEP</scope>
    <scope>MUTAGENESIS OF 162-GLN--GLN-169 AND 190-GLN--GLN-200</scope>
    <source>
        <strain>K12 / AD16</strain>
    </source>
</reference>
<reference key="18">
    <citation type="journal article" date="2003" name="Res. Microbiol.">
        <title>Changes in Escherichia coli transcriptome during acclimatization at low temperature.</title>
        <authorList>
            <person name="Polissi A."/>
            <person name="De Laurentis W."/>
            <person name="Zangrossi S."/>
            <person name="Briani F."/>
            <person name="Longhi V."/>
            <person name="Pesole G."/>
            <person name="Deho G."/>
        </authorList>
    </citation>
    <scope>INDUCTION BY COLD SHOCK</scope>
    <source>
        <strain>K12 / MG1655 / ATCC 47076</strain>
    </source>
</reference>
<reference key="19">
    <citation type="journal article" date="2004" name="EMBO J.">
        <title>RseP (YaeL), an Escherichia coli RIP protease, cleaves transmembrane sequences.</title>
        <authorList>
            <person name="Akiyama Y."/>
            <person name="Kanehara K."/>
            <person name="Ito K."/>
        </authorList>
    </citation>
    <scope>CLEAVAGE BY RSEP</scope>
</reference>
<reference key="20">
    <citation type="journal article" date="2007" name="Genes Dev.">
        <title>Design principles of the proteolytic cascade governing the sigmaE-mediated envelope stress response in Escherichia coli: keys to graded, buffered, and rapid signal transduction.</title>
        <authorList>
            <person name="Chaba R."/>
            <person name="Grigorova I.L."/>
            <person name="Flynn J.M."/>
            <person name="Baker T.A."/>
            <person name="Gross C.A."/>
        </authorList>
    </citation>
    <scope>REGULATION OF DEGRADATION</scope>
</reference>
<reference key="21">
    <citation type="journal article" date="2007" name="J. Mol. Biol.">
        <title>The structure of RseB: a sensor in periplasmic stress response of E. coli.</title>
        <authorList>
            <person name="Wollmann P."/>
            <person name="Zeth K."/>
        </authorList>
    </citation>
    <scope>INTERACTION WITH RSEB</scope>
    <scope>SUBUNIT</scope>
</reference>
<reference key="22">
    <citation type="journal article" date="2007" name="Proc. Natl. Acad. Sci. U.S.A.">
        <title>Inhibition of regulated proteolysis by RseB.</title>
        <authorList>
            <person name="Cezairliyan B.O."/>
            <person name="Sauer R.T."/>
        </authorList>
    </citation>
    <scope>INTERACTION WITH RSEB</scope>
    <scope>SUBUNIT</scope>
    <scope>DOMAIN</scope>
</reference>
<reference key="23">
    <citation type="journal article" date="2007" name="Proc. Natl. Acad. Sci. U.S.A.">
        <title>Crystal structure of RseB and a model of its binding mode to RseA.</title>
        <authorList>
            <person name="Kim D.Y."/>
            <person name="Jin K.S."/>
            <person name="Kwon E."/>
            <person name="Ree M."/>
            <person name="Kim K.K."/>
        </authorList>
    </citation>
    <scope>BINDING TO RSEB</scope>
    <scope>MUTAGENESIS OF ARG-172 AND ARG-185</scope>
</reference>
<reference key="24">
    <citation type="journal article" date="2008" name="J. Biol. Chem.">
        <title>Substrate recognition and binding by RseP, an Escherichia coli intramembrane protease.</title>
        <authorList>
            <person name="Koide K."/>
            <person name="Ito K."/>
            <person name="Akiyama Y."/>
        </authorList>
    </citation>
    <scope>INTERACTION WITH RSEP</scope>
    <scope>CLEAVAGE BY RSEP</scope>
    <source>
        <strain>K12 / AD16</strain>
    </source>
</reference>
<reference key="25">
    <citation type="journal article" date="2008" name="J. Synchrotron Radiat.">
        <title>Solution structures of RseA and its complex with RseB.</title>
        <authorList>
            <person name="Jin K.S."/>
            <person name="Kim D.Y."/>
            <person name="Rho Y."/>
            <person name="Le V.B."/>
            <person name="Kwon E."/>
            <person name="Kim K.K."/>
            <person name="Ree M."/>
        </authorList>
    </citation>
    <scope>INTERACTION WITH RSEB</scope>
    <scope>SUBUNIT</scope>
</reference>
<reference key="26">
    <citation type="journal article" date="2008" name="J. Biol. Chem.">
        <title>A pair of circularly permutated PDZ domains control RseP, the S2P family intramembrane protease of Escherichia coli.</title>
        <authorList>
            <person name="Inaba K."/>
            <person name="Suzuki M."/>
            <person name="Maegawa K."/>
            <person name="Akiyama S."/>
            <person name="Ito K."/>
            <person name="Akiyama Y."/>
        </authorList>
    </citation>
    <scope>CLEAVAGE BY DEGS AND RSEP</scope>
    <source>
        <strain>K12</strain>
    </source>
</reference>
<reference key="27">
    <citation type="journal article" date="2012" name="Mol. Microbiol.">
        <title>PDZ domains of RseP are not essential for sequential cleavage of RseA or stress-induced sigma(E) activation in vivo.</title>
        <authorList>
            <person name="Hizukuri Y."/>
            <person name="Akiyama Y."/>
        </authorList>
    </citation>
    <scope>MUTAGENESIS OF PRO-147 AND VAL-148</scope>
    <source>
        <strain>K12</strain>
    </source>
</reference>
<reference key="28">
    <citation type="journal article" date="2013" name="Science">
        <title>Dual molecular signals mediate the bacterial response to outer-membrane stress.</title>
        <authorList>
            <person name="Lima S."/>
            <person name="Guo M.S."/>
            <person name="Chaba R."/>
            <person name="Gross C.A."/>
            <person name="Sauer R.T."/>
        </authorList>
    </citation>
    <scope>FUNCTION</scope>
    <scope>BINDING TO RSEB</scope>
    <scope>SUBUNIT</scope>
    <scope>CLEAVAGE BY DEGS</scope>
    <source>
        <strain>K12</strain>
    </source>
</reference>
<reference key="29">
    <citation type="journal article" date="2017" name="J. Bacteriol.">
        <title>Circuitry linking the global Csr and sigma(E)-dependent cell envelope stress response systems.</title>
        <authorList>
            <person name="Yakhnin H."/>
            <person name="Aichele R."/>
            <person name="Ades S.E."/>
            <person name="Romeo T."/>
            <person name="Babitzke P."/>
        </authorList>
    </citation>
    <scope>OPERON</scope>
    <source>
        <strain>K12 / CF7789</strain>
    </source>
</reference>
<reference key="30">
    <citation type="journal article" date="2003" name="Mol. Cell">
        <title>Crystal structure of Escherichia coli sigmaE with the cytoplasmic domain of its anti-sigma RseA.</title>
        <authorList>
            <person name="Campbell E.A."/>
            <person name="Tupy J.L."/>
            <person name="Gruber T.M."/>
            <person name="Wang S."/>
            <person name="Sharp M.M."/>
            <person name="Gross C.A."/>
            <person name="Darst S.A."/>
        </authorList>
    </citation>
    <scope>X-RAY CRYSTALLOGRAPHY (2.0 ANGSTROMS) OF 1-90 IN COMPLEX WITH RPOE</scope>
    <scope>MODE OF ACTION</scope>
    <scope>SUBUNIT</scope>
</reference>
<reference key="31">
    <citation type="journal article" date="2005" name="Nat. Struct. Mol. Biol.">
        <title>Versatile modes of peptide recognition by the AAA+ adaptor protein SspB.</title>
        <authorList>
            <person name="Levchenko I."/>
            <person name="Grant R.A."/>
            <person name="Flynn J.M."/>
            <person name="Sauer R.T."/>
            <person name="Baker T.A."/>
        </authorList>
    </citation>
    <scope>X-RAY CRYSTALLOGRAPHY (1.8 ANGSTROMS) OF 77-108 IN COMPLEX WITH SSPB</scope>
    <scope>SUBUNIT</scope>
    <scope>MUTAGENESIS OF GLN-79; TRP-85 AND MET-88</scope>
</reference>
<reference key="32">
    <citation type="journal article" date="2010" name="Protein Sci.">
        <title>Structural basis for the negative regulation of bacterial stress response by RseB.</title>
        <authorList>
            <person name="Kim D.Y."/>
            <person name="Kwon E."/>
            <person name="Choi J."/>
            <person name="Hwang H.Y."/>
            <person name="Kim K.K."/>
        </authorList>
    </citation>
    <scope>X-RAY CRYSTALLOGRAPHY (2.30 ANGSTROMS) OF 121-216 IN COMPLEX WITH RSEB</scope>
</reference>
<accession>P0AFX7</accession>
<accession>P38106</accession>
<accession>Q2MAF8</accession>
<evidence type="ECO:0000255" key="1"/>
<evidence type="ECO:0000256" key="2">
    <source>
        <dbReference type="SAM" id="MobiDB-lite"/>
    </source>
</evidence>
<evidence type="ECO:0000269" key="3">
    <source>
    </source>
</evidence>
<evidence type="ECO:0000269" key="4">
    <source>
    </source>
</evidence>
<evidence type="ECO:0000269" key="5">
    <source>
    </source>
</evidence>
<evidence type="ECO:0000269" key="6">
    <source>
    </source>
</evidence>
<evidence type="ECO:0000269" key="7">
    <source>
    </source>
</evidence>
<evidence type="ECO:0000269" key="8">
    <source>
    </source>
</evidence>
<evidence type="ECO:0000269" key="9">
    <source>
    </source>
</evidence>
<evidence type="ECO:0000269" key="10">
    <source>
    </source>
</evidence>
<evidence type="ECO:0000269" key="11">
    <source>
    </source>
</evidence>
<evidence type="ECO:0000269" key="12">
    <source>
    </source>
</evidence>
<evidence type="ECO:0000269" key="13">
    <source>
    </source>
</evidence>
<evidence type="ECO:0000269" key="14">
    <source>
    </source>
</evidence>
<evidence type="ECO:0000269" key="15">
    <source>
    </source>
</evidence>
<evidence type="ECO:0000269" key="16">
    <source>
    </source>
</evidence>
<evidence type="ECO:0000269" key="17">
    <source>
    </source>
</evidence>
<evidence type="ECO:0000269" key="18">
    <source>
    </source>
</evidence>
<evidence type="ECO:0000269" key="19">
    <source>
    </source>
</evidence>
<evidence type="ECO:0000269" key="20">
    <source>
    </source>
</evidence>
<evidence type="ECO:0000269" key="21">
    <source>
    </source>
</evidence>
<evidence type="ECO:0000269" key="22">
    <source>
    </source>
</evidence>
<evidence type="ECO:0000269" key="23">
    <source>
    </source>
</evidence>
<evidence type="ECO:0000269" key="24">
    <source>
    </source>
</evidence>
<evidence type="ECO:0000269" key="25">
    <source>
    </source>
</evidence>
<evidence type="ECO:0000269" key="26">
    <source>
    </source>
</evidence>
<evidence type="ECO:0000269" key="27">
    <source>
    </source>
</evidence>
<evidence type="ECO:0000305" key="28"/>
<evidence type="ECO:0000305" key="29">
    <source>
    </source>
</evidence>
<evidence type="ECO:0000305" key="30">
    <source>
    </source>
</evidence>
<evidence type="ECO:0000305" key="31">
    <source>
    </source>
</evidence>
<evidence type="ECO:0007829" key="32">
    <source>
        <dbReference type="PDB" id="1OR7"/>
    </source>
</evidence>
<evidence type="ECO:0007829" key="33">
    <source>
        <dbReference type="PDB" id="1YFN"/>
    </source>
</evidence>
<evidence type="ECO:0007829" key="34">
    <source>
        <dbReference type="PDB" id="3M4W"/>
    </source>
</evidence>
<proteinExistence type="evidence at protein level"/>
<comment type="function">
    <text evidence="24 26 27">An anti-sigma factor for extracytoplasmic function (ECF) sigma factor sigma-E (RpoE). ECF sigma factors are held in an inactive form by an anti-sigma factor until released by regulated intramembrane proteolysis (RIP). RIP occurs when an extracytoplasmic signal triggers a concerted proteolytic cascade to transmit information and elicit cellular responses. The membrane-spanning regulatory substrate protein is first cut periplasmically (site-1 protease, S1P, DegS), then within the membrane itself (site-2 protease, S2P, RseP), while cytoplasmic proteases finish degrading the anti-sigma factor, liberating sigma-E. Overexpression of RseA blocks sigma-E from acting, results in cell lysis in stationary phase and temperature-sensitivity above 37 degrees Celsius.</text>
</comment>
<comment type="subunit">
    <text evidence="4 5 9 11 12 14 15 17 18 19 22 24 26 27">Interacts 1:1 with ECF RNA polymerase sigma-E (RpoE); this inhibits the interaction of sigma-E with the RNA polymerase catalytic core and leads to a decreased expression of sigma-E-regulated genes. Interacts with RseB with 1:1 stoichiometry. The liberated N-terminus (residues 1-108) forms a complex with SspB and RpoE; binding to SspB is competitively inhibited by ssrA-tags, although the 2 proteins bind in opposite directions in SspB's peptide-binding groove.</text>
</comment>
<comment type="interaction">
    <interactant intactId="EBI-1117560">
        <id>P0AFX7</id>
    </interactant>
    <interactant intactId="EBI-1132101">
        <id>P0AEE3</id>
        <label>degS</label>
    </interactant>
    <organismsDiffer>false</organismsDiffer>
    <experiments>7</experiments>
</comment>
<comment type="interaction">
    <interactant intactId="EBI-1117560">
        <id>P0AFX7</id>
    </interactant>
    <interactant intactId="EBI-1135231">
        <id>P0AFX9</id>
        <label>rseB</label>
    </interactant>
    <organismsDiffer>false</organismsDiffer>
    <experiments>9</experiments>
</comment>
<comment type="subcellular location">
    <subcellularLocation>
        <location evidence="4 7 26 27">Cell inner membrane</location>
        <topology evidence="4 7 26 27">Single-pass type II membrane protein</topology>
    </subcellularLocation>
    <text>Following cleavage by DegS the large fragment of the protein is still in the inner membrane and retains its anti-sigma-E activity.</text>
</comment>
<comment type="induction">
    <text evidence="3 10 25 26 27">Transiently induced by cold shock in a PNPase-dependent fashion. Upon stress induction (OMPs or heat shock) decreases in under 3 minutes (at protein level). Part of the rseD-rpoE-rseA-rseB-rseC operon (PubMed:28924029, PubMed:9159522, PubMed:9159523).</text>
</comment>
<comment type="domain">
    <text>The N-terminal cytosolic domain interacts with sigma-E, and upon overexpression leads to temperature sensitivity above 37 degrees Celsius and cell lysis in stationary phase. After degradation by RseP residues 77-108 bind to SspB, targeting RseA for degradation by the ClpX-ClpP protease.</text>
</comment>
<comment type="domain">
    <text>The C-terminal periplasmic domain (residues 169-186) interacts with RseB and is also the target for DegS; RseB and DegS binding sites do not appreciably overlap. Gln-rich regions (residues 162-169, Q1, and 190-200, Q2) contribute to preventing RseP from acting before DegS. Insertion of 8 consecutive Gln residues into a protein lacking Q1 and Q2 restores DegS-dependence of RseP cleavage.</text>
</comment>
<comment type="PTM">
    <text evidence="6 7 8 11 12 13 18 20 21 24">Sequentially cleaved by DegS (a site-1 protease) in its periplasmic domain between Val-148 and Ser-149, then by RseP (a site-2 protease) between positions Ala-108 and Cys-109. The N-terminal fragment is then degraded by primarily ClpX-ClpP in an ATP-dependent fashion. Sequential cleavage by DegS, RseP and ClpX-ClpP frees RpoE from RseA.</text>
</comment>
<comment type="disruption phenotype">
    <text evidence="4 26 27">About 10-fold increased sigma-E activity. Neither sigma-E nor RseB associate with the inner membrane.</text>
</comment>
<comment type="similarity">
    <text evidence="28">Belongs to the RseA family.</text>
</comment>
<comment type="caution">
    <text evidence="28">PubMed:9159522 mis-identifies Trp-33 as residue 32.</text>
</comment>
<comment type="caution">
    <text evidence="29 30">In vitro (PubMed:19706448) and in vivo (PubMed:23016873) results on the importance of the identity of residue 148 for cleavage by RseP differ.</text>
</comment>
<comment type="sequence caution" evidence="28">
    <conflict type="frameshift">
        <sequence resource="EMBL" id="D13169"/>
    </conflict>
</comment>
<sequence>MQKEQLSALMDGETLDSELLNELAHNPEMQKTWESYHLIRDSMRGDTPEVLHFDISSRVMAAIEEEPVRQPATLIPEAQPAPHQWQKMPFWQKVRPWAAQLTQMGVAACVSLAVIVGVQHYNGQSETSQQPETPVFNTLPMMGKASPVSLGVPSEATANNGQQQQVQEQRRRINAMLQDYELQRRLHSEQLQFEQAQTQQAAVQVPGIQTLGTQSQ</sequence>
<name>RSEA_ECOLI</name>
<feature type="chain" id="PRO_0000097480" description="Anti-sigma-E factor RseA">
    <location>
        <begin position="1"/>
        <end position="216"/>
    </location>
</feature>
<feature type="topological domain" description="Cytoplasmic" evidence="31">
    <location>
        <begin position="1"/>
        <end position="100"/>
    </location>
</feature>
<feature type="transmembrane region" description="Helical; Signal-anchor for type II membrane protein" evidence="28">
    <location>
        <begin position="101"/>
        <end position="118"/>
    </location>
</feature>
<feature type="topological domain" description="Periplasmic" evidence="31">
    <location>
        <begin position="119"/>
        <end position="216"/>
    </location>
</feature>
<feature type="region of interest" description="Sufficient to repress sigma-E">
    <location>
        <begin position="1"/>
        <end position="97"/>
    </location>
</feature>
<feature type="region of interest" description="Disordered" evidence="2">
    <location>
        <begin position="146"/>
        <end position="166"/>
    </location>
</feature>
<feature type="region of interest" description="Primary binding site for RseB">
    <location>
        <begin position="169"/>
        <end position="186"/>
    </location>
</feature>
<feature type="region of interest" description="Poly-Gln (Q2)">
    <location>
        <begin position="190"/>
        <end position="200"/>
    </location>
</feature>
<feature type="coiled-coil region" evidence="1">
    <location>
        <begin position="158"/>
        <end position="202"/>
    </location>
</feature>
<feature type="site" description="Cleavage; by RseP">
    <location>
        <begin position="108"/>
        <end position="109"/>
    </location>
</feature>
<feature type="site" description="Cleavage; by DegS">
    <location>
        <begin position="148"/>
        <end position="149"/>
    </location>
</feature>
<feature type="mutagenesis site" description="Loss of anti-sigma factor activity." evidence="26">
    <location>
        <begin position="1"/>
        <end position="28"/>
    </location>
</feature>
<feature type="mutagenesis site" description="Loss of anti-sigma factor activity." evidence="26">
    <original>D</original>
    <variation>H</variation>
    <location>
        <position position="11"/>
    </location>
</feature>
<feature type="mutagenesis site" description="Loss of anti-sigma factor activity." evidence="26">
    <original>L</original>
    <variation>P</variation>
    <location>
        <position position="19"/>
    </location>
</feature>
<feature type="mutagenesis site" description="Loss of anti-sigma factor activity." evidence="26">
    <original>W</original>
    <variation>C</variation>
    <location>
        <position position="33"/>
    </location>
</feature>
<feature type="mutagenesis site" description="No binding of N-terminal fragment to SspB." evidence="14">
    <original>Q</original>
    <variation>A</variation>
    <location>
        <position position="79"/>
    </location>
</feature>
<feature type="mutagenesis site" description="No binding of N-terminal fragment to SspB." evidence="14">
    <original>W</original>
    <variation>A</variation>
    <location>
        <position position="85"/>
    </location>
</feature>
<feature type="mutagenesis site" description="Reduced binding of N-terminal fragment to SspB." evidence="14">
    <original>M</original>
    <variation>A</variation>
    <location>
        <position position="88"/>
    </location>
</feature>
<feature type="mutagenesis site" description="Significantly less degradation by ClpX-ClpP when present as a 1-108 peptide fragment." evidence="12">
    <original>AA</original>
    <variation>DD</variation>
    <location>
        <begin position="107"/>
        <end position="108"/>
    </location>
</feature>
<feature type="mutagenesis site" description="No effect on protein cleavage." evidence="21">
    <original>S</original>
    <variation>X</variation>
    <location>
        <position position="146"/>
    </location>
</feature>
<feature type="mutagenesis site" description="No effect on protein cleavage in vitro and in vivo." evidence="21 23">
    <original>P</original>
    <variation>X</variation>
    <location>
        <position position="147"/>
    </location>
</feature>
<feature type="mutagenesis site" description="Normal cleavage by DegS and RseP in vitro (PubMed:19706448), for A-148 decreased cleavage by DegS in vivo (PubMed:23016873)." evidence="21 23">
    <original>V</original>
    <variation>A</variation>
    <variation>C</variation>
    <variation>I</variation>
    <variation>L</variation>
    <variation>M</variation>
    <variation>N</variation>
    <variation>T</variation>
    <location>
        <position position="148"/>
    </location>
</feature>
<feature type="mutagenesis site" description="Not cleaved by DegS nor RseP in vitro (PubMed:19706448)." evidence="21 23">
    <original>V</original>
    <variation>D</variation>
    <variation>E</variation>
    <variation>G</variation>
    <variation>F</variation>
    <variation>P</variation>
    <location>
        <position position="148"/>
    </location>
</feature>
<feature type="mutagenesis site" description="Cleaved by DegS but not by RseP in vitro (PubMed:19706448), for R-148 and S-148 decreased cleavage by DegS in vivo (PubMed:23016873)." evidence="21 23">
    <original>V</original>
    <variation>H</variation>
    <variation>K</variation>
    <variation>Q</variation>
    <variation>R</variation>
    <variation>S</variation>
    <variation>Y</variation>
    <location>
        <position position="148"/>
    </location>
</feature>
<feature type="mutagenesis site" description="RseA is degraded by RseP in the absence of DegS." evidence="11">
    <original>QQQQVQEQ</original>
    <variation>AAAAVAEA</variation>
    <location>
        <begin position="162"/>
        <end position="169"/>
    </location>
</feature>
<feature type="mutagenesis site" description="Still binds RseB. No binding to RseB; when associated with A-185." evidence="16">
    <original>R</original>
    <variation>A</variation>
    <location>
        <position position="172"/>
    </location>
</feature>
<feature type="mutagenesis site" description="No binding to RseB." evidence="16">
    <original>R</original>
    <variation>D</variation>
    <location>
        <position position="172"/>
    </location>
</feature>
<feature type="mutagenesis site" description="Still binds RseB. No binding to RseB; when associated with A-172." evidence="16">
    <original>R</original>
    <variation>A</variation>
    <location>
        <position position="185"/>
    </location>
</feature>
<feature type="mutagenesis site" description="No binding to RseB." evidence="16">
    <original>R</original>
    <variation>E</variation>
    <location>
        <position position="185"/>
    </location>
</feature>
<feature type="mutagenesis site" description="RseA is degraded by RseP in the absence of DegS." evidence="11">
    <original>QLQFEQAQTQQ</original>
    <variation>ALAFFAAATAA</variation>
    <location>
        <begin position="190"/>
        <end position="200"/>
    </location>
</feature>
<feature type="helix" evidence="32">
    <location>
        <begin position="3"/>
        <end position="10"/>
    </location>
</feature>
<feature type="helix" evidence="32">
    <location>
        <begin position="17"/>
        <end position="24"/>
    </location>
</feature>
<feature type="helix" evidence="32">
    <location>
        <begin position="27"/>
        <end position="44"/>
    </location>
</feature>
<feature type="strand" evidence="32">
    <location>
        <begin position="49"/>
        <end position="53"/>
    </location>
</feature>
<feature type="helix" evidence="32">
    <location>
        <begin position="55"/>
        <end position="64"/>
    </location>
</feature>
<feature type="helix" evidence="33">
    <location>
        <begin position="82"/>
        <end position="85"/>
    </location>
</feature>
<feature type="helix" evidence="33">
    <location>
        <begin position="89"/>
        <end position="93"/>
    </location>
</feature>
<feature type="helix" evidence="34">
    <location>
        <begin position="134"/>
        <end position="136"/>
    </location>
</feature>
<feature type="helix" evidence="34">
    <location>
        <begin position="170"/>
        <end position="186"/>
    </location>
</feature>
<gene>
    <name type="primary">rseA</name>
    <name type="synonym">mclA</name>
    <name type="synonym">yfiJ</name>
    <name type="ordered locus">b2572</name>
    <name type="ordered locus">JW2556</name>
</gene>